<name>VKT2B_RADCR</name>
<comment type="function">
    <text evidence="3 4 5">This protease inhibitor shows two different activities, it inhibits both the capsaicin receptor TRPV1 and serine proteases. It partially (max 50%) and reversibly inhibits capsaicin-induced response of TRPV1 (IC(50)=54 nM), a receptor of the pain pathway (PubMed:18579526, PubMed:24351908). The second activity is a weak inhibition of trypsin and chymotrypsin activity (Ki=1 uM and Ki=5 uM, respectively) (PubMed:18579526). In vivo, it shows antinociceptive and analgesic activities (PubMed:24351908). It significantly prolongs tail-flick latency and reduces capsaicin-induced acute pain (PubMed:18579526, PubMed:24351908). In vivo, unlike other TRPV1 antagonists whose activity is associated with hyperthermia, this protein has the remarkable feature of dropping core body temperature (PubMed:24351908).</text>
</comment>
<comment type="subcellular location">
    <subcellularLocation>
        <location evidence="3">Secreted</location>
    </subcellularLocation>
    <subcellularLocation>
        <location evidence="3">Nematocyst</location>
    </subcellularLocation>
</comment>
<comment type="mass spectrometry"/>
<comment type="miscellaneous">
    <text evidence="8">A synonymy between H.magnifica and R.crispa is controversial.</text>
</comment>
<comment type="similarity">
    <text evidence="8">Belongs to the venom Kunitz-type family. Sea anemone type 2 potassium channel toxin subfamily.</text>
</comment>
<keyword id="KW-0903">Direct protein sequencing</keyword>
<keyword id="KW-1015">Disulfide bond</keyword>
<keyword id="KW-0872">Ion channel impairing toxin</keyword>
<keyword id="KW-0166">Nematocyst</keyword>
<keyword id="KW-0528">Neurotoxin</keyword>
<keyword id="KW-0646">Protease inhibitor</keyword>
<keyword id="KW-0964">Secreted</keyword>
<keyword id="KW-0722">Serine protease inhibitor</keyword>
<keyword id="KW-0732">Signal</keyword>
<keyword id="KW-0800">Toxin</keyword>
<evidence type="ECO:0000250" key="1">
    <source>
        <dbReference type="UniProtKB" id="P31713"/>
    </source>
</evidence>
<evidence type="ECO:0000255" key="2">
    <source>
        <dbReference type="PROSITE-ProRule" id="PRU00031"/>
    </source>
</evidence>
<evidence type="ECO:0000269" key="3">
    <source>
    </source>
</evidence>
<evidence type="ECO:0000269" key="4">
    <source>
    </source>
</evidence>
<evidence type="ECO:0000269" key="5">
    <source>
    </source>
</evidence>
<evidence type="ECO:0000303" key="6">
    <source>
    </source>
</evidence>
<evidence type="ECO:0000303" key="7">
    <source>
    </source>
</evidence>
<evidence type="ECO:0000305" key="8"/>
<evidence type="ECO:0000305" key="9">
    <source>
    </source>
</evidence>
<evidence type="ECO:0000305" key="10">
    <source>
    </source>
</evidence>
<protein>
    <recommendedName>
        <fullName evidence="8">TauPI-stichotoxin-Hcr2b</fullName>
        <shortName evidence="7">TauPI-SHTX-Hcr2b</shortName>
    </recommendedName>
    <alternativeName>
        <fullName evidence="6">Analgesic polypeptide HC1</fullName>
        <shortName evidence="6">APHC1</shortName>
    </alternativeName>
</protein>
<reference key="1">
    <citation type="journal article" date="2008" name="J. Biol. Chem.">
        <title>Analgesic compound from sea anemone Heteractis crispa is the first polypeptide inhibitor of vanilloid receptor 1 (TRPV1).</title>
        <authorList>
            <person name="Andreev Y.A."/>
            <person name="Kozlov S.A."/>
            <person name="Koshelev S.G."/>
            <person name="Ivanova E.A."/>
            <person name="Monastyrnaya M.M."/>
            <person name="Kozlovskaya E.P."/>
            <person name="Grishin E.V."/>
        </authorList>
    </citation>
    <scope>NUCLEOTIDE SEQUENCE [MRNA]</scope>
    <scope>PROTEIN SEQUENCE OF 23-37</scope>
    <scope>FUNCTION</scope>
    <scope>MASS SPECTROMETRY</scope>
    <scope>SUBCELLULAR LOCATION</scope>
    <scope>3D-STRUCTURE MODELING</scope>
    <source>
        <tissue>Nematoblast</tissue>
    </source>
</reference>
<reference key="2">
    <citation type="journal article" date="2012" name="Bioorg. Khim.">
        <title>Interaction of sea amemone Heteractis crispa Kunitz type polypeptides with pain vanilloid receptor TRPV1: in silico investigation.</title>
        <authorList>
            <person name="Zelepuga E.A."/>
            <person name="Tabakmakher V.M."/>
            <person name="Chausova V.E."/>
            <person name="Monastyrnaia M.M."/>
            <person name="Isaeva M.P."/>
            <person name="Kozlovskaia E.P."/>
        </authorList>
    </citation>
    <scope>3D-STRUCTURE MODELING IN COMPLEX WITH TRPV1 RECEPTOR</scope>
</reference>
<reference key="3">
    <citation type="journal article" date="2012" name="Life Sci.">
        <title>Modulation of TRPV1-dependent contractility of normal and diabetic bladder smooth muscle by analgesic toxins from sea anemone Heteractis crispa.</title>
        <authorList>
            <person name="Philyppov I.B."/>
            <person name="Paduraru O.N."/>
            <person name="Andreev Y.A."/>
            <person name="Grishin E.V."/>
            <person name="Shuba Y.M."/>
        </authorList>
    </citation>
    <scope>FUNCTION</scope>
</reference>
<reference key="4">
    <citation type="journal article" date="2013" name="Mar. Drugs">
        <title>Polypeptide modulators of TRPV1 produce analgesia without hyperthermia.</title>
        <authorList>
            <person name="Andreev Y.A."/>
            <person name="Kozlov S.A."/>
            <person name="Korolkova Y.V."/>
            <person name="Dyachenko I.A."/>
            <person name="Bondarenko D.A."/>
            <person name="Skobtsov D.I."/>
            <person name="Murashev A.N."/>
            <person name="Kotova P.D."/>
            <person name="Rogachevskaja O.A."/>
            <person name="Kabanova N.V."/>
            <person name="Kolesnikov S.S."/>
            <person name="Grishin E.V."/>
        </authorList>
    </citation>
    <scope>FUNCTION</scope>
</reference>
<reference key="5">
    <citation type="journal article" date="2012" name="Toxicon">
        <title>Development of a rational nomenclature for naming peptide and protein toxins from sea anemones.</title>
        <authorList>
            <person name="Oliveira J.S."/>
            <person name="Fuentes-Silva D."/>
            <person name="King G.F."/>
        </authorList>
    </citation>
    <scope>NOMENCLATURE</scope>
</reference>
<dbReference type="EMBL" id="AM933240">
    <property type="protein sequence ID" value="CAP69846.1"/>
    <property type="molecule type" value="mRNA"/>
</dbReference>
<dbReference type="SMR" id="B2G331"/>
<dbReference type="MEROPS" id="I02.061"/>
<dbReference type="GO" id="GO:0005576">
    <property type="term" value="C:extracellular region"/>
    <property type="evidence" value="ECO:0000314"/>
    <property type="project" value="UniProtKB"/>
</dbReference>
<dbReference type="GO" id="GO:0005615">
    <property type="term" value="C:extracellular space"/>
    <property type="evidence" value="ECO:0007669"/>
    <property type="project" value="TreeGrafter"/>
</dbReference>
<dbReference type="GO" id="GO:0042151">
    <property type="term" value="C:nematocyst"/>
    <property type="evidence" value="ECO:0000314"/>
    <property type="project" value="UniProtKB"/>
</dbReference>
<dbReference type="GO" id="GO:0008200">
    <property type="term" value="F:ion channel inhibitor activity"/>
    <property type="evidence" value="ECO:0000314"/>
    <property type="project" value="UniProtKB"/>
</dbReference>
<dbReference type="GO" id="GO:0004867">
    <property type="term" value="F:serine-type endopeptidase inhibitor activity"/>
    <property type="evidence" value="ECO:0000314"/>
    <property type="project" value="UniProtKB"/>
</dbReference>
<dbReference type="GO" id="GO:0090729">
    <property type="term" value="F:toxin activity"/>
    <property type="evidence" value="ECO:0007669"/>
    <property type="project" value="UniProtKB-KW"/>
</dbReference>
<dbReference type="GO" id="GO:0044741">
    <property type="term" value="P:venom-mediated suppression of sensory perception of pain in another organism"/>
    <property type="evidence" value="ECO:0000314"/>
    <property type="project" value="UniProtKB"/>
</dbReference>
<dbReference type="CDD" id="cd22618">
    <property type="entry name" value="Kunitz_SHPI"/>
    <property type="match status" value="1"/>
</dbReference>
<dbReference type="FunFam" id="4.10.410.10:FF:000021">
    <property type="entry name" value="Serine protease inhibitor, putative"/>
    <property type="match status" value="1"/>
</dbReference>
<dbReference type="Gene3D" id="4.10.410.10">
    <property type="entry name" value="Pancreatic trypsin inhibitor Kunitz domain"/>
    <property type="match status" value="1"/>
</dbReference>
<dbReference type="InterPro" id="IPR002223">
    <property type="entry name" value="Kunitz_BPTI"/>
</dbReference>
<dbReference type="InterPro" id="IPR036880">
    <property type="entry name" value="Kunitz_BPTI_sf"/>
</dbReference>
<dbReference type="InterPro" id="IPR020901">
    <property type="entry name" value="Prtase_inh_Kunz-CS"/>
</dbReference>
<dbReference type="InterPro" id="IPR050098">
    <property type="entry name" value="TFPI/VKTCI-like"/>
</dbReference>
<dbReference type="PANTHER" id="PTHR10083:SF374">
    <property type="entry name" value="BPTI_KUNITZ INHIBITOR DOMAIN-CONTAINING PROTEIN"/>
    <property type="match status" value="1"/>
</dbReference>
<dbReference type="PANTHER" id="PTHR10083">
    <property type="entry name" value="KUNITZ-TYPE PROTEASE INHIBITOR-RELATED"/>
    <property type="match status" value="1"/>
</dbReference>
<dbReference type="Pfam" id="PF00014">
    <property type="entry name" value="Kunitz_BPTI"/>
    <property type="match status" value="1"/>
</dbReference>
<dbReference type="PRINTS" id="PR00759">
    <property type="entry name" value="BASICPTASE"/>
</dbReference>
<dbReference type="SMART" id="SM00131">
    <property type="entry name" value="KU"/>
    <property type="match status" value="1"/>
</dbReference>
<dbReference type="SUPFAM" id="SSF57362">
    <property type="entry name" value="BPTI-like"/>
    <property type="match status" value="1"/>
</dbReference>
<dbReference type="PROSITE" id="PS00280">
    <property type="entry name" value="BPTI_KUNITZ_1"/>
    <property type="match status" value="1"/>
</dbReference>
<dbReference type="PROSITE" id="PS50279">
    <property type="entry name" value="BPTI_KUNITZ_2"/>
    <property type="match status" value="1"/>
</dbReference>
<accession>B2G331</accession>
<proteinExistence type="evidence at protein level"/>
<feature type="signal peptide" evidence="3">
    <location>
        <begin position="1"/>
        <end position="22"/>
    </location>
</feature>
<feature type="chain" id="PRO_5000342888" description="TauPI-stichotoxin-Hcr2b" evidence="9">
    <location>
        <begin position="23"/>
        <end position="78"/>
    </location>
</feature>
<feature type="domain" description="BPTI/Kunitz inhibitor" evidence="2">
    <location>
        <begin position="26"/>
        <end position="76"/>
    </location>
</feature>
<feature type="site" description="May bind to TRPV1 subunit B" evidence="10">
    <location>
        <position position="23"/>
    </location>
</feature>
<feature type="site" description="May bind to TRPV1 subunit B" evidence="10">
    <location>
        <position position="28"/>
    </location>
</feature>
<feature type="site" description="Reactive bond for trypsin" evidence="1">
    <location>
        <begin position="36"/>
        <end position="37"/>
    </location>
</feature>
<feature type="site" description="May bind to TRPV1 subunit D" evidence="9 10">
    <location>
        <position position="53"/>
    </location>
</feature>
<feature type="site" description="May bind to TRPV1 subunit B" evidence="10">
    <location>
        <position position="60"/>
    </location>
</feature>
<feature type="site" description="Important for modulatory effect on TRPV1" evidence="9 10">
    <location>
        <position position="70"/>
    </location>
</feature>
<feature type="site" description="Has role in the stabilization of the complex by binding to different residues of TRPV1 subunit D" evidence="10">
    <location>
        <position position="73"/>
    </location>
</feature>
<feature type="disulfide bond" evidence="1">
    <location>
        <begin position="26"/>
        <end position="76"/>
    </location>
</feature>
<feature type="disulfide bond" evidence="1">
    <location>
        <begin position="35"/>
        <end position="59"/>
    </location>
</feature>
<feature type="disulfide bond" evidence="1">
    <location>
        <begin position="51"/>
        <end position="72"/>
    </location>
</feature>
<sequence>MKGTFLICLILIAGFSFKSTQAGSICLEPKVVGPCTAYFRRFYFDSETGKCTVFIYGGCEGNGNNFETLRACRAICRA</sequence>
<organism>
    <name type="scientific">Radianthus crispa</name>
    <name type="common">Leathery sea anemone</name>
    <name type="synonym">Heteractis crispa</name>
    <dbReference type="NCBI Taxonomy" id="3122430"/>
    <lineage>
        <taxon>Eukaryota</taxon>
        <taxon>Metazoa</taxon>
        <taxon>Cnidaria</taxon>
        <taxon>Anthozoa</taxon>
        <taxon>Hexacorallia</taxon>
        <taxon>Actiniaria</taxon>
        <taxon>Stichodactylidae</taxon>
        <taxon>Radianthus</taxon>
    </lineage>
</organism>